<dbReference type="EC" id="2.3.1.286" evidence="1 2"/>
<dbReference type="EMBL" id="BA000033">
    <property type="protein sequence ID" value="BAB95988.1"/>
    <property type="molecule type" value="Genomic_DNA"/>
</dbReference>
<dbReference type="SMR" id="Q8NVC8"/>
<dbReference type="KEGG" id="sam:MW2123"/>
<dbReference type="HOGENOM" id="CLU_023643_3_0_9"/>
<dbReference type="GO" id="GO:0005737">
    <property type="term" value="C:cytoplasm"/>
    <property type="evidence" value="ECO:0007669"/>
    <property type="project" value="UniProtKB-SubCell"/>
</dbReference>
<dbReference type="GO" id="GO:0017136">
    <property type="term" value="F:histone deacetylase activity, NAD-dependent"/>
    <property type="evidence" value="ECO:0007669"/>
    <property type="project" value="TreeGrafter"/>
</dbReference>
<dbReference type="GO" id="GO:0070403">
    <property type="term" value="F:NAD+ binding"/>
    <property type="evidence" value="ECO:0007669"/>
    <property type="project" value="UniProtKB-UniRule"/>
</dbReference>
<dbReference type="GO" id="GO:0008270">
    <property type="term" value="F:zinc ion binding"/>
    <property type="evidence" value="ECO:0007669"/>
    <property type="project" value="UniProtKB-UniRule"/>
</dbReference>
<dbReference type="CDD" id="cd01411">
    <property type="entry name" value="SIR2H"/>
    <property type="match status" value="1"/>
</dbReference>
<dbReference type="Gene3D" id="3.30.1600.10">
    <property type="entry name" value="SIR2/SIRT2 'Small Domain"/>
    <property type="match status" value="1"/>
</dbReference>
<dbReference type="Gene3D" id="3.40.50.1220">
    <property type="entry name" value="TPP-binding domain"/>
    <property type="match status" value="1"/>
</dbReference>
<dbReference type="HAMAP" id="MF_01968">
    <property type="entry name" value="Sirtuin_ClassU"/>
    <property type="match status" value="1"/>
</dbReference>
<dbReference type="InterPro" id="IPR029035">
    <property type="entry name" value="DHS-like_NAD/FAD-binding_dom"/>
</dbReference>
<dbReference type="InterPro" id="IPR050134">
    <property type="entry name" value="NAD-dep_sirtuin_deacylases"/>
</dbReference>
<dbReference type="InterPro" id="IPR003000">
    <property type="entry name" value="Sirtuin"/>
</dbReference>
<dbReference type="InterPro" id="IPR026591">
    <property type="entry name" value="Sirtuin_cat_small_dom_sf"/>
</dbReference>
<dbReference type="InterPro" id="IPR028628">
    <property type="entry name" value="Sirtuin_class_U"/>
</dbReference>
<dbReference type="InterPro" id="IPR026590">
    <property type="entry name" value="Ssirtuin_cat_dom"/>
</dbReference>
<dbReference type="NCBIfam" id="NF001752">
    <property type="entry name" value="PRK00481.1-1"/>
    <property type="match status" value="1"/>
</dbReference>
<dbReference type="PANTHER" id="PTHR11085:SF4">
    <property type="entry name" value="NAD-DEPENDENT PROTEIN DEACYLASE"/>
    <property type="match status" value="1"/>
</dbReference>
<dbReference type="PANTHER" id="PTHR11085">
    <property type="entry name" value="NAD-DEPENDENT PROTEIN DEACYLASE SIRTUIN-5, MITOCHONDRIAL-RELATED"/>
    <property type="match status" value="1"/>
</dbReference>
<dbReference type="Pfam" id="PF02146">
    <property type="entry name" value="SIR2"/>
    <property type="match status" value="1"/>
</dbReference>
<dbReference type="SUPFAM" id="SSF52467">
    <property type="entry name" value="DHS-like NAD/FAD-binding domain"/>
    <property type="match status" value="1"/>
</dbReference>
<dbReference type="PROSITE" id="PS50305">
    <property type="entry name" value="SIRTUIN"/>
    <property type="match status" value="1"/>
</dbReference>
<comment type="function">
    <text evidence="1">NAD-dependent protein deacetylase which modulates the activities of several enzymes which are inactive in their acetylated form.</text>
</comment>
<comment type="catalytic activity">
    <reaction evidence="1">
        <text>N(6)-acetyl-L-lysyl-[protein] + NAD(+) + H2O = 2''-O-acetyl-ADP-D-ribose + nicotinamide + L-lysyl-[protein]</text>
        <dbReference type="Rhea" id="RHEA:43636"/>
        <dbReference type="Rhea" id="RHEA-COMP:9752"/>
        <dbReference type="Rhea" id="RHEA-COMP:10731"/>
        <dbReference type="ChEBI" id="CHEBI:15377"/>
        <dbReference type="ChEBI" id="CHEBI:17154"/>
        <dbReference type="ChEBI" id="CHEBI:29969"/>
        <dbReference type="ChEBI" id="CHEBI:57540"/>
        <dbReference type="ChEBI" id="CHEBI:61930"/>
        <dbReference type="ChEBI" id="CHEBI:83767"/>
        <dbReference type="EC" id="2.3.1.286"/>
    </reaction>
</comment>
<comment type="cofactor">
    <cofactor evidence="1">
        <name>Zn(2+)</name>
        <dbReference type="ChEBI" id="CHEBI:29105"/>
    </cofactor>
    <text evidence="1">Binds 1 zinc ion per subunit.</text>
</comment>
<comment type="subcellular location">
    <subcellularLocation>
        <location evidence="1">Cytoplasm</location>
    </subcellularLocation>
</comment>
<comment type="similarity">
    <text evidence="1">Belongs to the sirtuin family. Class U subfamily.</text>
</comment>
<gene>
    <name evidence="1" type="primary">cobB</name>
    <name type="ordered locus">MW2123</name>
</gene>
<evidence type="ECO:0000255" key="1">
    <source>
        <dbReference type="HAMAP-Rule" id="MF_01968"/>
    </source>
</evidence>
<evidence type="ECO:0000255" key="2">
    <source>
        <dbReference type="PROSITE-ProRule" id="PRU00236"/>
    </source>
</evidence>
<name>NPD_STAAW</name>
<proteinExistence type="inferred from homology"/>
<accession>Q8NVC8</accession>
<feature type="chain" id="PRO_0000110356" description="NAD-dependent protein deacetylase">
    <location>
        <begin position="1"/>
        <end position="243"/>
    </location>
</feature>
<feature type="domain" description="Deacetylase sirtuin-type" evidence="2">
    <location>
        <begin position="1"/>
        <end position="243"/>
    </location>
</feature>
<feature type="active site" description="Proton acceptor" evidence="2">
    <location>
        <position position="123"/>
    </location>
</feature>
<feature type="binding site" evidence="1">
    <location>
        <position position="24"/>
    </location>
    <ligand>
        <name>NAD(+)</name>
        <dbReference type="ChEBI" id="CHEBI:57540"/>
    </ligand>
</feature>
<feature type="binding site" evidence="1">
    <location>
        <position position="35"/>
    </location>
    <ligand>
        <name>NAD(+)</name>
        <dbReference type="ChEBI" id="CHEBI:57540"/>
    </ligand>
</feature>
<feature type="binding site" evidence="1">
    <location>
        <position position="35"/>
    </location>
    <ligand>
        <name>nicotinamide</name>
        <dbReference type="ChEBI" id="CHEBI:17154"/>
    </ligand>
</feature>
<feature type="binding site" evidence="1">
    <location>
        <position position="36"/>
    </location>
    <ligand>
        <name>NAD(+)</name>
        <dbReference type="ChEBI" id="CHEBI:57540"/>
    </ligand>
</feature>
<feature type="binding site" evidence="1">
    <location>
        <position position="105"/>
    </location>
    <ligand>
        <name>NAD(+)</name>
        <dbReference type="ChEBI" id="CHEBI:57540"/>
    </ligand>
</feature>
<feature type="binding site" evidence="1">
    <location>
        <position position="107"/>
    </location>
    <ligand>
        <name>NAD(+)</name>
        <dbReference type="ChEBI" id="CHEBI:57540"/>
    </ligand>
</feature>
<feature type="binding site" evidence="1">
    <location>
        <position position="107"/>
    </location>
    <ligand>
        <name>nicotinamide</name>
        <dbReference type="ChEBI" id="CHEBI:17154"/>
    </ligand>
</feature>
<feature type="binding site" evidence="1">
    <location>
        <position position="108"/>
    </location>
    <ligand>
        <name>NAD(+)</name>
        <dbReference type="ChEBI" id="CHEBI:57540"/>
    </ligand>
</feature>
<feature type="binding site" evidence="1">
    <location>
        <position position="108"/>
    </location>
    <ligand>
        <name>nicotinamide</name>
        <dbReference type="ChEBI" id="CHEBI:17154"/>
    </ligand>
</feature>
<feature type="binding site" evidence="1">
    <location>
        <position position="123"/>
    </location>
    <ligand>
        <name>NAD(+)</name>
        <dbReference type="ChEBI" id="CHEBI:57540"/>
    </ligand>
</feature>
<feature type="binding site" evidence="1">
    <location>
        <position position="131"/>
    </location>
    <ligand>
        <name>Zn(2+)</name>
        <dbReference type="ChEBI" id="CHEBI:29105"/>
    </ligand>
</feature>
<feature type="binding site" evidence="1">
    <location>
        <position position="134"/>
    </location>
    <ligand>
        <name>Zn(2+)</name>
        <dbReference type="ChEBI" id="CHEBI:29105"/>
    </ligand>
</feature>
<feature type="binding site" evidence="1">
    <location>
        <position position="151"/>
    </location>
    <ligand>
        <name>Zn(2+)</name>
        <dbReference type="ChEBI" id="CHEBI:29105"/>
    </ligand>
</feature>
<feature type="binding site" evidence="1">
    <location>
        <position position="154"/>
    </location>
    <ligand>
        <name>Zn(2+)</name>
        <dbReference type="ChEBI" id="CHEBI:29105"/>
    </ligand>
</feature>
<feature type="binding site" evidence="1">
    <location>
        <position position="192"/>
    </location>
    <ligand>
        <name>NAD(+)</name>
        <dbReference type="ChEBI" id="CHEBI:57540"/>
    </ligand>
</feature>
<feature type="binding site" evidence="1">
    <location>
        <position position="193"/>
    </location>
    <ligand>
        <name>NAD(+)</name>
        <dbReference type="ChEBI" id="CHEBI:57540"/>
    </ligand>
</feature>
<feature type="binding site" evidence="1">
    <location>
        <position position="215"/>
    </location>
    <ligand>
        <name>NAD(+)</name>
        <dbReference type="ChEBI" id="CHEBI:57540"/>
    </ligand>
</feature>
<feature type="binding site" evidence="1">
    <location>
        <position position="232"/>
    </location>
    <ligand>
        <name>NAD(+)</name>
        <dbReference type="ChEBI" id="CHEBI:57540"/>
    </ligand>
</feature>
<protein>
    <recommendedName>
        <fullName evidence="1">NAD-dependent protein deacetylase</fullName>
        <ecNumber evidence="1 2">2.3.1.286</ecNumber>
    </recommendedName>
    <alternativeName>
        <fullName evidence="1">Regulatory protein SIR2 homolog</fullName>
    </alternativeName>
</protein>
<reference key="1">
    <citation type="journal article" date="2002" name="Lancet">
        <title>Genome and virulence determinants of high virulence community-acquired MRSA.</title>
        <authorList>
            <person name="Baba T."/>
            <person name="Takeuchi F."/>
            <person name="Kuroda M."/>
            <person name="Yuzawa H."/>
            <person name="Aoki K."/>
            <person name="Oguchi A."/>
            <person name="Nagai Y."/>
            <person name="Iwama N."/>
            <person name="Asano K."/>
            <person name="Naimi T."/>
            <person name="Kuroda H."/>
            <person name="Cui L."/>
            <person name="Yamamoto K."/>
            <person name="Hiramatsu K."/>
        </authorList>
    </citation>
    <scope>NUCLEOTIDE SEQUENCE [LARGE SCALE GENOMIC DNA]</scope>
    <source>
        <strain>MW2</strain>
    </source>
</reference>
<sequence>MRNDLETLKHIIDSSNRITFFTGAGVSVASGVPDFRSMGGLFDEISKDGLSPEYLLSRDYLEDDPEGFINFCHKRLLFVDTKPNIVHDWIAKLERNQQSLGVITQNIDGLHSDAGSQHVDELHGTLNRFYCNACHKSYTKSDVIDRTLKHCDNCGGAIRPDIVLYGEMLDQPTIIRSLNKIEHADTLVVLGSSLVVQPAAGLISNFKGDNLIIINKDRTPYDRDATLVIHDDMVSVVKSLMTE</sequence>
<keyword id="KW-0963">Cytoplasm</keyword>
<keyword id="KW-0479">Metal-binding</keyword>
<keyword id="KW-0520">NAD</keyword>
<keyword id="KW-0808">Transferase</keyword>
<keyword id="KW-0862">Zinc</keyword>
<organism>
    <name type="scientific">Staphylococcus aureus (strain MW2)</name>
    <dbReference type="NCBI Taxonomy" id="196620"/>
    <lineage>
        <taxon>Bacteria</taxon>
        <taxon>Bacillati</taxon>
        <taxon>Bacillota</taxon>
        <taxon>Bacilli</taxon>
        <taxon>Bacillales</taxon>
        <taxon>Staphylococcaceae</taxon>
        <taxon>Staphylococcus</taxon>
    </lineage>
</organism>